<dbReference type="EC" id="2.1.3.15" evidence="2"/>
<dbReference type="EMBL" id="EF380352">
    <property type="protein sequence ID" value="ABQ43269.1"/>
    <property type="molecule type" value="Genomic_DNA"/>
</dbReference>
<dbReference type="RefSeq" id="YP_001294107.1">
    <property type="nucleotide sequence ID" value="NC_009598.1"/>
</dbReference>
<dbReference type="SMR" id="A6MMD1"/>
<dbReference type="GeneID" id="5236453"/>
<dbReference type="UniPathway" id="UPA00655">
    <property type="reaction ID" value="UER00711"/>
</dbReference>
<dbReference type="GO" id="GO:0009317">
    <property type="term" value="C:acetyl-CoA carboxylase complex"/>
    <property type="evidence" value="ECO:0007669"/>
    <property type="project" value="InterPro"/>
</dbReference>
<dbReference type="GO" id="GO:0009570">
    <property type="term" value="C:chloroplast stroma"/>
    <property type="evidence" value="ECO:0007669"/>
    <property type="project" value="UniProtKB-SubCell"/>
</dbReference>
<dbReference type="GO" id="GO:0003989">
    <property type="term" value="F:acetyl-CoA carboxylase activity"/>
    <property type="evidence" value="ECO:0007669"/>
    <property type="project" value="InterPro"/>
</dbReference>
<dbReference type="GO" id="GO:0005524">
    <property type="term" value="F:ATP binding"/>
    <property type="evidence" value="ECO:0007669"/>
    <property type="project" value="UniProtKB-KW"/>
</dbReference>
<dbReference type="GO" id="GO:0016743">
    <property type="term" value="F:carboxyl- or carbamoyltransferase activity"/>
    <property type="evidence" value="ECO:0007669"/>
    <property type="project" value="UniProtKB-UniRule"/>
</dbReference>
<dbReference type="GO" id="GO:0008270">
    <property type="term" value="F:zinc ion binding"/>
    <property type="evidence" value="ECO:0007669"/>
    <property type="project" value="UniProtKB-UniRule"/>
</dbReference>
<dbReference type="GO" id="GO:0006633">
    <property type="term" value="P:fatty acid biosynthetic process"/>
    <property type="evidence" value="ECO:0007669"/>
    <property type="project" value="UniProtKB-KW"/>
</dbReference>
<dbReference type="GO" id="GO:2001295">
    <property type="term" value="P:malonyl-CoA biosynthetic process"/>
    <property type="evidence" value="ECO:0007669"/>
    <property type="project" value="UniProtKB-UniRule"/>
</dbReference>
<dbReference type="Gene3D" id="3.90.226.10">
    <property type="entry name" value="2-enoyl-CoA Hydratase, Chain A, domain 1"/>
    <property type="match status" value="1"/>
</dbReference>
<dbReference type="HAMAP" id="MF_01395">
    <property type="entry name" value="AcetylCoA_CT_beta"/>
    <property type="match status" value="1"/>
</dbReference>
<dbReference type="InterPro" id="IPR034733">
    <property type="entry name" value="AcCoA_carboxyl_beta"/>
</dbReference>
<dbReference type="InterPro" id="IPR000438">
    <property type="entry name" value="Acetyl_CoA_COase_Trfase_b_su"/>
</dbReference>
<dbReference type="InterPro" id="IPR029045">
    <property type="entry name" value="ClpP/crotonase-like_dom_sf"/>
</dbReference>
<dbReference type="InterPro" id="IPR011762">
    <property type="entry name" value="COA_CT_N"/>
</dbReference>
<dbReference type="NCBIfam" id="TIGR00515">
    <property type="entry name" value="accD"/>
    <property type="match status" value="1"/>
</dbReference>
<dbReference type="PANTHER" id="PTHR42995">
    <property type="entry name" value="ACETYL-COENZYME A CARBOXYLASE CARBOXYL TRANSFERASE SUBUNIT BETA, CHLOROPLASTIC"/>
    <property type="match status" value="1"/>
</dbReference>
<dbReference type="PANTHER" id="PTHR42995:SF5">
    <property type="entry name" value="ACETYL-COENZYME A CARBOXYLASE CARBOXYL TRANSFERASE SUBUNIT BETA, CHLOROPLASTIC"/>
    <property type="match status" value="1"/>
</dbReference>
<dbReference type="Pfam" id="PF01039">
    <property type="entry name" value="Carboxyl_trans"/>
    <property type="match status" value="1"/>
</dbReference>
<dbReference type="PRINTS" id="PR01070">
    <property type="entry name" value="ACCCTRFRASEB"/>
</dbReference>
<dbReference type="SUPFAM" id="SSF52096">
    <property type="entry name" value="ClpP/crotonase"/>
    <property type="match status" value="1"/>
</dbReference>
<dbReference type="PROSITE" id="PS50980">
    <property type="entry name" value="COA_CT_NTER"/>
    <property type="match status" value="1"/>
</dbReference>
<name>ACCD_CHLSC</name>
<geneLocation type="chloroplast"/>
<organism>
    <name type="scientific">Chloranthus spicatus</name>
    <name type="common">Chulantree</name>
    <name type="synonym">Nigrina spicata</name>
    <dbReference type="NCBI Taxonomy" id="13006"/>
    <lineage>
        <taxon>Eukaryota</taxon>
        <taxon>Viridiplantae</taxon>
        <taxon>Streptophyta</taxon>
        <taxon>Embryophyta</taxon>
        <taxon>Tracheophyta</taxon>
        <taxon>Spermatophyta</taxon>
        <taxon>Magnoliopsida</taxon>
        <taxon>Chloranthales</taxon>
        <taxon>Chloranthaceae</taxon>
        <taxon>Chloranthus</taxon>
    </lineage>
</organism>
<sequence>MEKWWFNSMLSNEELEHRWGLSKSMESLGPIGNTRGSEDPIINDTDKNIHSYSWSDSGSYSCSNVDHFFGVSDIWSFISDETFLVRDSNGKGYSVYFDIENRIFEIDNDSSFLSELESSFSSYLSNGSKNDNRYYDSYMYDTKYSWNNHMNSCIDSYLRSEISIDSYISTGSDNFSDSYIYSYIFSEKVSGSDSESSSIRTSGNDSNFNVRERDNDFDRNQKYGRLWVQCENCYELNYRSFFRSKMNICEQCGYHLKMNSLDRIELSIDSGTWNPMDDDMVSMDPIEFHSMEEPYRDRIDSYQRNTGLTEAVQTGIGQLNGIPIAIGVMDFQFMGGSMGSVVGEKITRLIEYATNESIPVIMVCASGGARMQEGSLSLMQMAKISSASYNYQLNKKLFYVSILTSPTTGGVTASFGMLGDIIIAEPNAYIAFAGKRVIEQTLNKTVPDGSQVAEYSFHKGLFDPIVPRNPLKGVLSELFQLHGFFPLNQNSSGARGSVICSE</sequence>
<protein>
    <recommendedName>
        <fullName evidence="2">Acetyl-coenzyme A carboxylase carboxyl transferase subunit beta, chloroplastic</fullName>
        <shortName evidence="2">ACCase subunit beta</shortName>
        <shortName evidence="2">Acetyl-CoA carboxylase carboxyltransferase subunit beta</shortName>
        <ecNumber evidence="2">2.1.3.15</ecNumber>
    </recommendedName>
</protein>
<feature type="chain" id="PRO_0000359129" description="Acetyl-coenzyme A carboxylase carboxyl transferase subunit beta, chloroplastic">
    <location>
        <begin position="1"/>
        <end position="502"/>
    </location>
</feature>
<feature type="domain" description="CoA carboxyltransferase N-terminal" evidence="3">
    <location>
        <begin position="226"/>
        <end position="497"/>
    </location>
</feature>
<feature type="zinc finger region" description="C4-type" evidence="2">
    <location>
        <begin position="230"/>
        <end position="252"/>
    </location>
</feature>
<feature type="region of interest" description="Disordered" evidence="4">
    <location>
        <begin position="191"/>
        <end position="212"/>
    </location>
</feature>
<feature type="compositionally biased region" description="Low complexity" evidence="4">
    <location>
        <begin position="191"/>
        <end position="202"/>
    </location>
</feature>
<feature type="binding site" evidence="2">
    <location>
        <position position="230"/>
    </location>
    <ligand>
        <name>Zn(2+)</name>
        <dbReference type="ChEBI" id="CHEBI:29105"/>
    </ligand>
</feature>
<feature type="binding site" evidence="2">
    <location>
        <position position="233"/>
    </location>
    <ligand>
        <name>Zn(2+)</name>
        <dbReference type="ChEBI" id="CHEBI:29105"/>
    </ligand>
</feature>
<feature type="binding site" evidence="2">
    <location>
        <position position="249"/>
    </location>
    <ligand>
        <name>Zn(2+)</name>
        <dbReference type="ChEBI" id="CHEBI:29105"/>
    </ligand>
</feature>
<feature type="binding site" evidence="2">
    <location>
        <position position="252"/>
    </location>
    <ligand>
        <name>Zn(2+)</name>
        <dbReference type="ChEBI" id="CHEBI:29105"/>
    </ligand>
</feature>
<gene>
    <name evidence="2" type="primary">accD</name>
</gene>
<evidence type="ECO:0000250" key="1"/>
<evidence type="ECO:0000255" key="2">
    <source>
        <dbReference type="HAMAP-Rule" id="MF_01395"/>
    </source>
</evidence>
<evidence type="ECO:0000255" key="3">
    <source>
        <dbReference type="PROSITE-ProRule" id="PRU01136"/>
    </source>
</evidence>
<evidence type="ECO:0000256" key="4">
    <source>
        <dbReference type="SAM" id="MobiDB-lite"/>
    </source>
</evidence>
<proteinExistence type="inferred from homology"/>
<comment type="function">
    <text evidence="2">Component of the acetyl coenzyme A carboxylase (ACC) complex. Biotin carboxylase (BC) catalyzes the carboxylation of biotin on its carrier protein (BCCP) and then the CO(2) group is transferred by the transcarboxylase to acetyl-CoA to form malonyl-CoA.</text>
</comment>
<comment type="catalytic activity">
    <reaction evidence="2">
        <text>N(6)-carboxybiotinyl-L-lysyl-[protein] + acetyl-CoA = N(6)-biotinyl-L-lysyl-[protein] + malonyl-CoA</text>
        <dbReference type="Rhea" id="RHEA:54728"/>
        <dbReference type="Rhea" id="RHEA-COMP:10505"/>
        <dbReference type="Rhea" id="RHEA-COMP:10506"/>
        <dbReference type="ChEBI" id="CHEBI:57288"/>
        <dbReference type="ChEBI" id="CHEBI:57384"/>
        <dbReference type="ChEBI" id="CHEBI:83144"/>
        <dbReference type="ChEBI" id="CHEBI:83145"/>
        <dbReference type="EC" id="2.1.3.15"/>
    </reaction>
</comment>
<comment type="cofactor">
    <cofactor evidence="2">
        <name>Zn(2+)</name>
        <dbReference type="ChEBI" id="CHEBI:29105"/>
    </cofactor>
    <text evidence="2">Binds 1 zinc ion per subunit.</text>
</comment>
<comment type="pathway">
    <text evidence="2">Lipid metabolism; malonyl-CoA biosynthesis; malonyl-CoA from acetyl-CoA: step 1/1.</text>
</comment>
<comment type="subunit">
    <text evidence="1">Acetyl-CoA carboxylase is a heterohexamer composed of biotin carboxyl carrier protein, biotin carboxylase and 2 subunits each of ACCase subunit alpha and ACCase plastid-coded subunit beta (accD).</text>
</comment>
<comment type="subcellular location">
    <subcellularLocation>
        <location evidence="2">Plastid</location>
        <location evidence="2">Chloroplast stroma</location>
    </subcellularLocation>
</comment>
<comment type="similarity">
    <text evidence="2">Belongs to the AccD/PCCB family.</text>
</comment>
<reference key="1">
    <citation type="journal article" date="2007" name="Mol. Phylogenet. Evol.">
        <title>Phylogenetic and evolutionary implications of complete chloroplast genome sequences of four early-diverging angiosperms: Buxus (Buxaceae), Chloranthus (Chloranthaceae), Dioscorea (Dioscoreaceae), and Illicium (Schisandraceae).</title>
        <authorList>
            <person name="Hansen D.R."/>
            <person name="Dastidar S.G."/>
            <person name="Cai Z."/>
            <person name="Penaflor C."/>
            <person name="Kuehl J.V."/>
            <person name="Boore J.L."/>
            <person name="Jansen R.K."/>
        </authorList>
    </citation>
    <scope>NUCLEOTIDE SEQUENCE [LARGE SCALE GENOMIC DNA]</scope>
</reference>
<accession>A6MMD1</accession>
<keyword id="KW-0067">ATP-binding</keyword>
<keyword id="KW-0150">Chloroplast</keyword>
<keyword id="KW-0275">Fatty acid biosynthesis</keyword>
<keyword id="KW-0276">Fatty acid metabolism</keyword>
<keyword id="KW-0444">Lipid biosynthesis</keyword>
<keyword id="KW-0443">Lipid metabolism</keyword>
<keyword id="KW-0479">Metal-binding</keyword>
<keyword id="KW-0547">Nucleotide-binding</keyword>
<keyword id="KW-0934">Plastid</keyword>
<keyword id="KW-0808">Transferase</keyword>
<keyword id="KW-0862">Zinc</keyword>
<keyword id="KW-0863">Zinc-finger</keyword>